<feature type="chain" id="PRO_1000058564" description="DNA repair protein RecO">
    <location>
        <begin position="1"/>
        <end position="242"/>
    </location>
</feature>
<comment type="function">
    <text evidence="1">Involved in DNA repair and RecF pathway recombination.</text>
</comment>
<comment type="subunit">
    <text evidence="1">Monomer.</text>
</comment>
<comment type="similarity">
    <text evidence="1">Belongs to the RecO family.</text>
</comment>
<name>RECO_ECO24</name>
<proteinExistence type="inferred from homology"/>
<evidence type="ECO:0000255" key="1">
    <source>
        <dbReference type="HAMAP-Rule" id="MF_00201"/>
    </source>
</evidence>
<reference key="1">
    <citation type="journal article" date="2008" name="J. Bacteriol.">
        <title>The pangenome structure of Escherichia coli: comparative genomic analysis of E. coli commensal and pathogenic isolates.</title>
        <authorList>
            <person name="Rasko D.A."/>
            <person name="Rosovitz M.J."/>
            <person name="Myers G.S.A."/>
            <person name="Mongodin E.F."/>
            <person name="Fricke W.F."/>
            <person name="Gajer P."/>
            <person name="Crabtree J."/>
            <person name="Sebaihia M."/>
            <person name="Thomson N.R."/>
            <person name="Chaudhuri R."/>
            <person name="Henderson I.R."/>
            <person name="Sperandio V."/>
            <person name="Ravel J."/>
        </authorList>
    </citation>
    <scope>NUCLEOTIDE SEQUENCE [LARGE SCALE GENOMIC DNA]</scope>
    <source>
        <strain>E24377A / ETEC</strain>
    </source>
</reference>
<keyword id="KW-0227">DNA damage</keyword>
<keyword id="KW-0233">DNA recombination</keyword>
<keyword id="KW-0234">DNA repair</keyword>
<keyword id="KW-1185">Reference proteome</keyword>
<dbReference type="EMBL" id="CP000800">
    <property type="protein sequence ID" value="ABV20281.1"/>
    <property type="molecule type" value="Genomic_DNA"/>
</dbReference>
<dbReference type="RefSeq" id="WP_000399393.1">
    <property type="nucleotide sequence ID" value="NC_009801.1"/>
</dbReference>
<dbReference type="SMR" id="A7ZQ09"/>
<dbReference type="GeneID" id="93774526"/>
<dbReference type="KEGG" id="ecw:EcE24377A_2851"/>
<dbReference type="HOGENOM" id="CLU_066645_1_0_6"/>
<dbReference type="Proteomes" id="UP000001122">
    <property type="component" value="Chromosome"/>
</dbReference>
<dbReference type="GO" id="GO:0043590">
    <property type="term" value="C:bacterial nucleoid"/>
    <property type="evidence" value="ECO:0007669"/>
    <property type="project" value="TreeGrafter"/>
</dbReference>
<dbReference type="GO" id="GO:0006310">
    <property type="term" value="P:DNA recombination"/>
    <property type="evidence" value="ECO:0007669"/>
    <property type="project" value="UniProtKB-UniRule"/>
</dbReference>
<dbReference type="GO" id="GO:0006302">
    <property type="term" value="P:double-strand break repair"/>
    <property type="evidence" value="ECO:0007669"/>
    <property type="project" value="TreeGrafter"/>
</dbReference>
<dbReference type="FunFam" id="1.20.1440.120:FF:000001">
    <property type="entry name" value="DNA repair protein RecO"/>
    <property type="match status" value="1"/>
</dbReference>
<dbReference type="FunFam" id="2.40.50.140:FF:000074">
    <property type="entry name" value="DNA repair protein RecO"/>
    <property type="match status" value="1"/>
</dbReference>
<dbReference type="Gene3D" id="2.40.50.140">
    <property type="entry name" value="Nucleic acid-binding proteins"/>
    <property type="match status" value="1"/>
</dbReference>
<dbReference type="Gene3D" id="1.20.1440.120">
    <property type="entry name" value="Recombination protein O, C-terminal domain"/>
    <property type="match status" value="1"/>
</dbReference>
<dbReference type="HAMAP" id="MF_00201">
    <property type="entry name" value="RecO"/>
    <property type="match status" value="1"/>
</dbReference>
<dbReference type="InterPro" id="IPR037278">
    <property type="entry name" value="ARFGAP/RecO"/>
</dbReference>
<dbReference type="InterPro" id="IPR022572">
    <property type="entry name" value="DNA_rep/recomb_RecO_N"/>
</dbReference>
<dbReference type="InterPro" id="IPR012340">
    <property type="entry name" value="NA-bd_OB-fold"/>
</dbReference>
<dbReference type="InterPro" id="IPR003717">
    <property type="entry name" value="RecO"/>
</dbReference>
<dbReference type="InterPro" id="IPR042242">
    <property type="entry name" value="RecO_C"/>
</dbReference>
<dbReference type="NCBIfam" id="TIGR00613">
    <property type="entry name" value="reco"/>
    <property type="match status" value="1"/>
</dbReference>
<dbReference type="PANTHER" id="PTHR33991">
    <property type="entry name" value="DNA REPAIR PROTEIN RECO"/>
    <property type="match status" value="1"/>
</dbReference>
<dbReference type="PANTHER" id="PTHR33991:SF1">
    <property type="entry name" value="DNA REPAIR PROTEIN RECO"/>
    <property type="match status" value="1"/>
</dbReference>
<dbReference type="Pfam" id="PF02565">
    <property type="entry name" value="RecO_C"/>
    <property type="match status" value="1"/>
</dbReference>
<dbReference type="Pfam" id="PF11967">
    <property type="entry name" value="RecO_N"/>
    <property type="match status" value="1"/>
</dbReference>
<dbReference type="SUPFAM" id="SSF57863">
    <property type="entry name" value="ArfGap/RecO-like zinc finger"/>
    <property type="match status" value="1"/>
</dbReference>
<dbReference type="SUPFAM" id="SSF50249">
    <property type="entry name" value="Nucleic acid-binding proteins"/>
    <property type="match status" value="1"/>
</dbReference>
<accession>A7ZQ09</accession>
<gene>
    <name evidence="1" type="primary">recO</name>
    <name type="ordered locus">EcE24377A_2851</name>
</gene>
<organism>
    <name type="scientific">Escherichia coli O139:H28 (strain E24377A / ETEC)</name>
    <dbReference type="NCBI Taxonomy" id="331111"/>
    <lineage>
        <taxon>Bacteria</taxon>
        <taxon>Pseudomonadati</taxon>
        <taxon>Pseudomonadota</taxon>
        <taxon>Gammaproteobacteria</taxon>
        <taxon>Enterobacterales</taxon>
        <taxon>Enterobacteriaceae</taxon>
        <taxon>Escherichia</taxon>
    </lineage>
</organism>
<protein>
    <recommendedName>
        <fullName evidence="1">DNA repair protein RecO</fullName>
    </recommendedName>
    <alternativeName>
        <fullName evidence="1">Recombination protein O</fullName>
    </alternativeName>
</protein>
<sequence>MEGWQRAFVLHSRPWSETSLMLDVFTEESGRVRLVAKGARSKRSTLKGALQPFTPLLLRFGGRGEVKTLRSAEAVSLALPLSGITLYSGLYINELLSRVLEYETRFSELFFDYLHCIQSLAGATGTPEPALRRFELALLGHLGYGVNFTHCAGSGEPVDDTMTYRYREEKGFIASVVIDNKTFTGRQLKALNAREFPDADTLRAAKRFTRMALKPYLGGKPLKSRELFRQFMPKRTVKTHYE</sequence>